<gene>
    <name evidence="1" type="primary">HA</name>
</gene>
<dbReference type="EMBL" id="D90307">
    <property type="protein sequence ID" value="BAA14337.1"/>
    <property type="molecule type" value="Genomic_RNA"/>
</dbReference>
<dbReference type="EMBL" id="J02104">
    <property type="protein sequence ID" value="AAA43180.1"/>
    <property type="molecule type" value="Genomic_RNA"/>
</dbReference>
<dbReference type="PDB" id="7A9D">
    <property type="method" value="X-ray"/>
    <property type="resolution" value="2.70 A"/>
    <property type="chains" value="B/D=343-509"/>
</dbReference>
<dbReference type="PDBsum" id="7A9D"/>
<dbReference type="SMR" id="P03446"/>
<dbReference type="GlyCosmos" id="P03446">
    <property type="glycosylation" value="10 sites, No reported glycans"/>
</dbReference>
<dbReference type="PRO" id="PR:P03446"/>
<dbReference type="GO" id="GO:0020002">
    <property type="term" value="C:host cell plasma membrane"/>
    <property type="evidence" value="ECO:0007669"/>
    <property type="project" value="UniProtKB-SubCell"/>
</dbReference>
<dbReference type="GO" id="GO:0016020">
    <property type="term" value="C:membrane"/>
    <property type="evidence" value="ECO:0007669"/>
    <property type="project" value="UniProtKB-UniRule"/>
</dbReference>
<dbReference type="GO" id="GO:0019031">
    <property type="term" value="C:viral envelope"/>
    <property type="evidence" value="ECO:0007669"/>
    <property type="project" value="UniProtKB-UniRule"/>
</dbReference>
<dbReference type="GO" id="GO:0055036">
    <property type="term" value="C:virion membrane"/>
    <property type="evidence" value="ECO:0007669"/>
    <property type="project" value="UniProtKB-SubCell"/>
</dbReference>
<dbReference type="GO" id="GO:0046789">
    <property type="term" value="F:host cell surface receptor binding"/>
    <property type="evidence" value="ECO:0007669"/>
    <property type="project" value="UniProtKB-UniRule"/>
</dbReference>
<dbReference type="GO" id="GO:0075512">
    <property type="term" value="P:clathrin-dependent endocytosis of virus by host cell"/>
    <property type="evidence" value="ECO:0007669"/>
    <property type="project" value="UniProtKB-UniRule"/>
</dbReference>
<dbReference type="GO" id="GO:0039654">
    <property type="term" value="P:fusion of virus membrane with host endosome membrane"/>
    <property type="evidence" value="ECO:0007669"/>
    <property type="project" value="UniProtKB-UniRule"/>
</dbReference>
<dbReference type="GO" id="GO:0019064">
    <property type="term" value="P:fusion of virus membrane with host plasma membrane"/>
    <property type="evidence" value="ECO:0007669"/>
    <property type="project" value="InterPro"/>
</dbReference>
<dbReference type="GO" id="GO:0046761">
    <property type="term" value="P:viral budding from plasma membrane"/>
    <property type="evidence" value="ECO:0007669"/>
    <property type="project" value="UniProtKB-UniRule"/>
</dbReference>
<dbReference type="GO" id="GO:0019062">
    <property type="term" value="P:virion attachment to host cell"/>
    <property type="evidence" value="ECO:0007669"/>
    <property type="project" value="UniProtKB-KW"/>
</dbReference>
<dbReference type="Gene3D" id="3.90.20.10">
    <property type="match status" value="1"/>
</dbReference>
<dbReference type="Gene3D" id="3.90.209.20">
    <property type="match status" value="1"/>
</dbReference>
<dbReference type="HAMAP" id="MF_04072">
    <property type="entry name" value="INFV_HEMA"/>
    <property type="match status" value="1"/>
</dbReference>
<dbReference type="InterPro" id="IPR008980">
    <property type="entry name" value="Capsid_hemagglutn"/>
</dbReference>
<dbReference type="InterPro" id="IPR013828">
    <property type="entry name" value="Hemagglutn_HA1_a/b_dom_sf"/>
</dbReference>
<dbReference type="InterPro" id="IPR000149">
    <property type="entry name" value="Hemagglutn_influenz_A"/>
</dbReference>
<dbReference type="InterPro" id="IPR001364">
    <property type="entry name" value="Hemagglutn_influenz_A/B"/>
</dbReference>
<dbReference type="Pfam" id="PF00509">
    <property type="entry name" value="Hemagglutinin"/>
    <property type="match status" value="1"/>
</dbReference>
<dbReference type="PRINTS" id="PR00330">
    <property type="entry name" value="HEMAGGLUTN1"/>
</dbReference>
<dbReference type="PRINTS" id="PR00329">
    <property type="entry name" value="HEMAGGLUTN12"/>
</dbReference>
<dbReference type="SUPFAM" id="SSF58064">
    <property type="entry name" value="Influenza hemagglutinin (stalk)"/>
    <property type="match status" value="1"/>
</dbReference>
<dbReference type="SUPFAM" id="SSF49818">
    <property type="entry name" value="Viral protein domain"/>
    <property type="match status" value="1"/>
</dbReference>
<reference key="1">
    <citation type="journal article" date="1991" name="Virology">
        <title>Comparison of complete amino acid sequences and receptor-binding properties among 13 serotypes of hemagglutinins of influenza A viruses.</title>
        <authorList>
            <person name="Nobusawa E."/>
            <person name="Aoyama T."/>
            <person name="Kato H."/>
            <person name="Suzuki Y."/>
            <person name="Tateno Y."/>
            <person name="Nakajima K."/>
        </authorList>
    </citation>
    <scope>NUCLEOTIDE SEQUENCE [GENOMIC RNA]</scope>
</reference>
<reference key="2">
    <citation type="journal article" date="1981" name="Proc. Natl. Acad. Sci. U.S.A.">
        <title>Sequence relationships among the hemagglutinin genes of 12 subtypes of influenza A virus.</title>
        <authorList>
            <person name="Air G.M."/>
        </authorList>
    </citation>
    <scope>NUCLEOTIDE SEQUENCE [GENOMIC RNA] OF 1-101</scope>
</reference>
<protein>
    <recommendedName>
        <fullName evidence="1">Hemagglutinin</fullName>
    </recommendedName>
    <component>
        <recommendedName>
            <fullName evidence="1">Hemagglutinin HA1 chain</fullName>
        </recommendedName>
    </component>
    <component>
        <recommendedName>
            <fullName evidence="1">Hemagglutinin HA2 chain</fullName>
        </recommendedName>
    </component>
</protein>
<organism>
    <name type="scientific">Influenza A virus (strain A/Duck/Alberta/60/1976 H12N5)</name>
    <dbReference type="NCBI Taxonomy" id="385582"/>
    <lineage>
        <taxon>Viruses</taxon>
        <taxon>Riboviria</taxon>
        <taxon>Orthornavirae</taxon>
        <taxon>Negarnaviricota</taxon>
        <taxon>Polyploviricotina</taxon>
        <taxon>Insthoviricetes</taxon>
        <taxon>Articulavirales</taxon>
        <taxon>Orthomyxoviridae</taxon>
        <taxon>Alphainfluenzavirus</taxon>
        <taxon>Alphainfluenzavirus influenzae</taxon>
        <taxon>Influenza A virus</taxon>
    </lineage>
</organism>
<keyword id="KW-0002">3D-structure</keyword>
<keyword id="KW-1167">Clathrin- and caveolin-independent endocytosis of virus by host</keyword>
<keyword id="KW-1165">Clathrin-mediated endocytosis of virus by host</keyword>
<keyword id="KW-1015">Disulfide bond</keyword>
<keyword id="KW-1170">Fusion of virus membrane with host endosomal membrane</keyword>
<keyword id="KW-1168">Fusion of virus membrane with host membrane</keyword>
<keyword id="KW-0325">Glycoprotein</keyword>
<keyword id="KW-0348">Hemagglutinin</keyword>
<keyword id="KW-1032">Host cell membrane</keyword>
<keyword id="KW-1043">Host membrane</keyword>
<keyword id="KW-0945">Host-virus interaction</keyword>
<keyword id="KW-0449">Lipoprotein</keyword>
<keyword id="KW-0472">Membrane</keyword>
<keyword id="KW-0564">Palmitate</keyword>
<keyword id="KW-0732">Signal</keyword>
<keyword id="KW-0812">Transmembrane</keyword>
<keyword id="KW-1133">Transmembrane helix</keyword>
<keyword id="KW-1161">Viral attachment to host cell</keyword>
<keyword id="KW-0261">Viral envelope protein</keyword>
<keyword id="KW-1162">Viral penetration into host cytoplasm</keyword>
<keyword id="KW-0946">Virion</keyword>
<keyword id="KW-1164">Virus endocytosis by host</keyword>
<keyword id="KW-1160">Virus entry into host cell</keyword>
<organismHost>
    <name type="scientific">Aves</name>
    <dbReference type="NCBI Taxonomy" id="8782"/>
</organismHost>
<organismHost>
    <name type="scientific">Sus scrofa</name>
    <name type="common">Pig</name>
    <dbReference type="NCBI Taxonomy" id="9823"/>
</organismHost>
<name>HEMA_I76A2</name>
<comment type="function">
    <text>Binds to sialic acid-containing receptors on the cell surface, bringing about the attachment of the virus particle to the cell. This attachment induces virion internalization of about two third of the virus particles through clathrin-dependent endocytosis and about one third through a clathrin- and caveolin-independent pathway. Plays a major role in the determination of host range restriction and virulence. Class I viral fusion protein. Responsible for penetration of the virus into the cell cytoplasm by mediating the fusion of the membrane of the endocytosed virus particle with the endosomal membrane. Low pH in endosomes induces an irreversible conformational change in HA2, releasing the fusion hydrophobic peptide. Several trimers are required to form a competent fusion pore.</text>
</comment>
<comment type="function">
    <text evidence="1">Binds to sialic acid-containing receptors on the cell surface, bringing about the attachment of the virus particle to the cell. This attachment induces virion internalization either through clathrin-dependent endocytosis or through clathrin- and caveolin-independent pathway. Plays a major role in the determination of host range restriction and virulence. Class I viral fusion protein. Responsible for penetration of the virus into the cell cytoplasm by mediating the fusion of the membrane of the endocytosed virus particle with the endosomal membrane. Low pH in endosomes induces an irreversible conformational change in HA2, releasing the fusion hydrophobic peptide. Several trimers are required to form a competent fusion pore.</text>
</comment>
<comment type="subunit">
    <text evidence="1">Homotrimer of disulfide-linked HA1-HA2.</text>
</comment>
<comment type="subcellular location">
    <subcellularLocation>
        <location evidence="1">Virion membrane</location>
        <topology evidence="1">Single-pass type I membrane protein</topology>
    </subcellularLocation>
    <subcellularLocation>
        <location evidence="1">Host apical cell membrane</location>
        <topology evidence="1">Single-pass type I membrane protein</topology>
    </subcellularLocation>
    <text evidence="1">Targeted to the apical plasma membrane in epithelial polarized cells through a signal present in the transmembrane domain. Associated with glycosphingolipid- and cholesterol-enriched detergent-resistant lipid rafts.</text>
</comment>
<comment type="PTM">
    <text evidence="1">Palmitoylated.</text>
</comment>
<comment type="PTM">
    <text evidence="1">In natural infection, inactive HA is matured into HA1 and HA2 outside the cell by one or more trypsin-like, arginine-specific endoprotease secreted by the bronchial epithelial cells. One identified protease that may be involved in this process is secreted in lungs by club cells.</text>
</comment>
<comment type="miscellaneous">
    <text>Major glycoprotein, comprises over 80% of the envelope proteins present in virus particle.</text>
</comment>
<comment type="miscellaneous">
    <text>The extent of infection into host organism is determined by HA. Influenza viruses bud from the apical surface of polarized epithelial cells (e.g. bronchial epithelial cells) into lumen of lungs and are therefore usually pneumotropic. The reason is that HA is cleaved by tryptase clara which is restricted to lungs. However, HAs of H5 and H7 pantropic avian viruses subtypes can be cleaved by furin and subtilisin-type enzymes, allowing the virus to grow in other organs than lungs.</text>
</comment>
<comment type="miscellaneous">
    <text evidence="2">The influenza A genome consist of 8 RNA segments. Genetic variation of hemagglutinin and/or neuraminidase genes results in the emergence of new influenza strains. The mechanism of variation can be the result of point mutations or the result of genetic reassortment between segments of two different strains.</text>
</comment>
<comment type="similarity">
    <text evidence="1">Belongs to the influenza viruses hemagglutinin family.</text>
</comment>
<accession>P03446</accession>
<feature type="signal peptide" evidence="1">
    <location>
        <begin position="1"/>
        <end position="16"/>
    </location>
</feature>
<feature type="chain" id="PRO_0000440448" description="Hemagglutinin" evidence="1">
    <location>
        <begin position="17"/>
        <end position="564"/>
    </location>
</feature>
<feature type="chain" id="PRO_0000038906" description="Hemagglutinin HA1 chain" evidence="1">
    <location>
        <begin position="18"/>
        <end position="341"/>
    </location>
</feature>
<feature type="chain" id="PRO_0000038907" description="Hemagglutinin HA2 chain" evidence="1">
    <location>
        <begin position="343"/>
        <end position="564"/>
    </location>
</feature>
<feature type="topological domain" description="Extracellular" evidence="1">
    <location>
        <begin position="17"/>
        <end position="530"/>
    </location>
</feature>
<feature type="transmembrane region" description="Helical" evidence="1">
    <location>
        <begin position="531"/>
        <end position="551"/>
    </location>
</feature>
<feature type="topological domain" description="Cytoplasmic" evidence="1">
    <location>
        <begin position="552"/>
        <end position="564"/>
    </location>
</feature>
<feature type="site" description="Cleavage; by host" evidence="1">
    <location>
        <begin position="342"/>
        <end position="343"/>
    </location>
</feature>
<feature type="lipid moiety-binding region" description="S-palmitoyl cysteine; by host" evidence="1">
    <location>
        <position position="553"/>
    </location>
</feature>
<feature type="lipid moiety-binding region" description="S-palmitoyl cysteine; by host" evidence="1">
    <location>
        <position position="560"/>
    </location>
</feature>
<feature type="lipid moiety-binding region" description="S-palmitoyl cysteine; by host" evidence="1">
    <location>
        <position position="563"/>
    </location>
</feature>
<feature type="glycosylation site" description="N-linked (GlcNAc...) asparagine; by host" evidence="1">
    <location>
        <position position="27"/>
    </location>
</feature>
<feature type="glycosylation site" description="N-linked (GlcNAc...) asparagine; by host" evidence="1">
    <location>
        <position position="28"/>
    </location>
</feature>
<feature type="glycosylation site" description="N-linked (GlcNAc...) asparagine; by host" evidence="1">
    <location>
        <position position="140"/>
    </location>
</feature>
<feature type="glycosylation site" description="N-linked (GlcNAc...) asparagine; by host" evidence="1">
    <location>
        <position position="151"/>
    </location>
</feature>
<feature type="glycosylation site" description="N-linked (GlcNAc...) asparagine; by host" evidence="1">
    <location>
        <position position="152"/>
    </location>
</feature>
<feature type="glycosylation site" description="N-linked (GlcNAc...) asparagine; by host" evidence="1">
    <location>
        <position position="222"/>
    </location>
</feature>
<feature type="glycosylation site" description="N-linked (GlcNAc...) asparagine; by host" evidence="1">
    <location>
        <position position="302"/>
    </location>
</feature>
<feature type="glycosylation site" description="N-linked (GlcNAc...) asparagine; by host" evidence="1">
    <location>
        <position position="309"/>
    </location>
</feature>
<feature type="glycosylation site" description="N-linked (GlcNAc...) asparagine; by host" evidence="1">
    <location>
        <position position="496"/>
    </location>
</feature>
<feature type="glycosylation site" description="N-linked (GlcNAc...) asparagine; by host" evidence="1">
    <location>
        <position position="523"/>
    </location>
</feature>
<feature type="disulfide bond" description="Interchain (between HA1 and HA2 chains)" evidence="1">
    <location>
        <begin position="21"/>
        <end position="479"/>
    </location>
</feature>
<feature type="disulfide bond" evidence="1">
    <location>
        <begin position="59"/>
        <end position="290"/>
    </location>
</feature>
<feature type="disulfide bond" evidence="1">
    <location>
        <begin position="72"/>
        <end position="84"/>
    </location>
</feature>
<feature type="disulfide bond" evidence="1">
    <location>
        <begin position="107"/>
        <end position="150"/>
    </location>
</feature>
<feature type="disulfide bond" evidence="1">
    <location>
        <begin position="294"/>
        <end position="318"/>
    </location>
</feature>
<feature type="disulfide bond" evidence="1">
    <location>
        <begin position="486"/>
        <end position="490"/>
    </location>
</feature>
<feature type="sequence conflict" description="In Ref. 2; AAA43180." evidence="2" ref="2">
    <original>Q</original>
    <variation>L</variation>
    <location>
        <position position="39"/>
    </location>
</feature>
<feature type="sequence conflict" description="In Ref. 2; AAA43180." evidence="2" ref="2">
    <original>R</original>
    <variation>G</variation>
    <location>
        <position position="52"/>
    </location>
</feature>
<feature type="strand" evidence="3">
    <location>
        <begin position="19"/>
        <end position="25"/>
    </location>
</feature>
<feature type="strand" evidence="3">
    <location>
        <begin position="39"/>
        <end position="44"/>
    </location>
</feature>
<feature type="strand" evidence="3">
    <location>
        <begin position="46"/>
        <end position="48"/>
    </location>
</feature>
<feature type="strand" evidence="3">
    <location>
        <begin position="58"/>
        <end position="61"/>
    </location>
</feature>
<feature type="strand" evidence="3">
    <location>
        <begin position="67"/>
        <end position="72"/>
    </location>
</feature>
<feature type="helix" evidence="3">
    <location>
        <begin position="74"/>
        <end position="79"/>
    </location>
</feature>
<feature type="helix" evidence="3">
    <location>
        <begin position="85"/>
        <end position="87"/>
    </location>
</feature>
<feature type="strand" evidence="3">
    <location>
        <begin position="94"/>
        <end position="98"/>
    </location>
</feature>
<feature type="strand" evidence="3">
    <location>
        <begin position="108"/>
        <end position="112"/>
    </location>
</feature>
<feature type="helix" evidence="3">
    <location>
        <begin position="115"/>
        <end position="124"/>
    </location>
</feature>
<feature type="strand" evidence="3">
    <location>
        <begin position="125"/>
        <end position="132"/>
    </location>
</feature>
<feature type="strand" evidence="3">
    <location>
        <begin position="138"/>
        <end position="142"/>
    </location>
</feature>
<feature type="strand" evidence="3">
    <location>
        <begin position="147"/>
        <end position="151"/>
    </location>
</feature>
<feature type="strand" evidence="3">
    <location>
        <begin position="161"/>
        <end position="165"/>
    </location>
</feature>
<feature type="strand" evidence="3">
    <location>
        <begin position="176"/>
        <end position="181"/>
    </location>
</feature>
<feature type="strand" evidence="3">
    <location>
        <begin position="184"/>
        <end position="186"/>
    </location>
</feature>
<feature type="strand" evidence="3">
    <location>
        <begin position="188"/>
        <end position="196"/>
    </location>
</feature>
<feature type="helix" evidence="3">
    <location>
        <begin position="200"/>
        <end position="206"/>
    </location>
</feature>
<feature type="strand" evidence="3">
    <location>
        <begin position="214"/>
        <end position="217"/>
    </location>
</feature>
<feature type="strand" evidence="3">
    <location>
        <begin position="222"/>
        <end position="225"/>
    </location>
</feature>
<feature type="strand" evidence="3">
    <location>
        <begin position="235"/>
        <end position="237"/>
    </location>
</feature>
<feature type="strand" evidence="3">
    <location>
        <begin position="241"/>
        <end position="249"/>
    </location>
</feature>
<feature type="strand" evidence="3">
    <location>
        <begin position="254"/>
        <end position="261"/>
    </location>
</feature>
<feature type="strand" evidence="3">
    <location>
        <begin position="264"/>
        <end position="274"/>
    </location>
</feature>
<feature type="strand" evidence="3">
    <location>
        <begin position="280"/>
        <end position="282"/>
    </location>
</feature>
<feature type="strand" evidence="3">
    <location>
        <begin position="287"/>
        <end position="291"/>
    </location>
</feature>
<feature type="strand" evidence="3">
    <location>
        <begin position="293"/>
        <end position="298"/>
    </location>
</feature>
<feature type="strand" evidence="3">
    <location>
        <begin position="306"/>
        <end position="308"/>
    </location>
</feature>
<feature type="strand" evidence="3">
    <location>
        <begin position="314"/>
        <end position="317"/>
    </location>
</feature>
<feature type="strand" evidence="3">
    <location>
        <begin position="328"/>
        <end position="330"/>
    </location>
</feature>
<feature type="turn" evidence="3">
    <location>
        <begin position="349"/>
        <end position="351"/>
    </location>
</feature>
<feature type="strand" evidence="3">
    <location>
        <begin position="363"/>
        <end position="370"/>
    </location>
</feature>
<feature type="strand" evidence="3">
    <location>
        <begin position="373"/>
        <end position="375"/>
    </location>
</feature>
<feature type="helix" evidence="3">
    <location>
        <begin position="380"/>
        <end position="400"/>
    </location>
</feature>
<feature type="helix" evidence="3">
    <location>
        <begin position="417"/>
        <end position="468"/>
    </location>
</feature>
<feature type="strand" evidence="3">
    <location>
        <begin position="471"/>
        <end position="474"/>
    </location>
</feature>
<feature type="strand" evidence="3">
    <location>
        <begin position="476"/>
        <end position="481"/>
    </location>
</feature>
<feature type="helix" evidence="3">
    <location>
        <begin position="488"/>
        <end position="495"/>
    </location>
</feature>
<feature type="helix" evidence="3">
    <location>
        <begin position="505"/>
        <end position="508"/>
    </location>
</feature>
<evidence type="ECO:0000255" key="1">
    <source>
        <dbReference type="HAMAP-Rule" id="MF_04072"/>
    </source>
</evidence>
<evidence type="ECO:0000305" key="2"/>
<evidence type="ECO:0007829" key="3">
    <source>
        <dbReference type="PDB" id="7A9D"/>
    </source>
</evidence>
<sequence length="564" mass="63713">MEKFIILSTVLAASFAYDKICIGYQTNNSTETVNTLSEQNVPVTQVEELVHRGIDPILCGTELGSPLVLDDCSLEGLILGNPKCDLYLNGREWSYIVERPKEMEGVCYPGSIENQEELRSLFSSIKKYERVKMFDFTKWNVTYTGTSKACNNTSNQGSFYRSMRWLTLKSGQFPVQTDEYKNTRDSDIVFTWAIHHPPTSDEQVKLYKNPDTLSSVTTVEINRSFKPNIGPRPLVRGQQGRMDYYWAVLKPGQTVKIQTNGNLIAPEYGHLITGKSHGRILKNNLPMGQCVTECQLNEGVMNTSKPFQNTSKHYIGKCPKYIPSGSLKLAIGLRNVPQVQDRGLFGAIAGFIEGGWPGLVAGWYGFQHQNAEGTGIAADRDSTQRAIDNMQNKLNNVIDKMNKQFEVVNHEFSEVESRINMINSKIDDQITDIWAYNAELLVLLENQKTLDEHDANVRNLHDRVRRVLRENAIDTGDGCFEILHKCDNNCMDTIRNGTYNHKEYEEESKIERQKVNGVKLEENSTYKILSIYSSVASSLVLLLMIIGGFIFGCQNGNVRCTFCI</sequence>
<proteinExistence type="evidence at protein level"/>